<feature type="chain" id="PRO_0000345673" description="Cell division protein ZapA">
    <location>
        <begin position="1"/>
        <end position="109"/>
    </location>
</feature>
<feature type="coiled-coil region" evidence="1">
    <location>
        <begin position="22"/>
        <end position="99"/>
    </location>
</feature>
<sequence>MSAQPVDIQVFGRSLRVNCPPEQQDALNMAAEDLSQRLQDLKVRTRVNNTEQLVFIAALNVCHELAQERLKTRDYASNMEQRIRMLQQTIEQALLEQGRISDRQDTQFE</sequence>
<name>ZAPA_YERPY</name>
<evidence type="ECO:0000255" key="1">
    <source>
        <dbReference type="HAMAP-Rule" id="MF_02012"/>
    </source>
</evidence>
<keyword id="KW-0131">Cell cycle</keyword>
<keyword id="KW-0132">Cell division</keyword>
<keyword id="KW-0175">Coiled coil</keyword>
<keyword id="KW-0963">Cytoplasm</keyword>
<keyword id="KW-0717">Septation</keyword>
<protein>
    <recommendedName>
        <fullName evidence="1">Cell division protein ZapA</fullName>
    </recommendedName>
    <alternativeName>
        <fullName evidence="1">Z ring-associated protein ZapA</fullName>
    </alternativeName>
</protein>
<dbReference type="EMBL" id="CP000950">
    <property type="protein sequence ID" value="ACA67162.1"/>
    <property type="molecule type" value="Genomic_DNA"/>
</dbReference>
<dbReference type="RefSeq" id="WP_002209954.1">
    <property type="nucleotide sequence ID" value="NZ_CP009792.1"/>
</dbReference>
<dbReference type="SMR" id="B1JNS0"/>
<dbReference type="GeneID" id="96662508"/>
<dbReference type="KEGG" id="ypy:YPK_0861"/>
<dbReference type="PATRIC" id="fig|502800.11.peg.1486"/>
<dbReference type="GO" id="GO:0032153">
    <property type="term" value="C:cell division site"/>
    <property type="evidence" value="ECO:0007669"/>
    <property type="project" value="TreeGrafter"/>
</dbReference>
<dbReference type="GO" id="GO:0030428">
    <property type="term" value="C:cell septum"/>
    <property type="evidence" value="ECO:0007669"/>
    <property type="project" value="TreeGrafter"/>
</dbReference>
<dbReference type="GO" id="GO:0005829">
    <property type="term" value="C:cytosol"/>
    <property type="evidence" value="ECO:0007669"/>
    <property type="project" value="TreeGrafter"/>
</dbReference>
<dbReference type="GO" id="GO:0005886">
    <property type="term" value="C:plasma membrane"/>
    <property type="evidence" value="ECO:0007669"/>
    <property type="project" value="UniProtKB-UniRule"/>
</dbReference>
<dbReference type="GO" id="GO:0000917">
    <property type="term" value="P:division septum assembly"/>
    <property type="evidence" value="ECO:0007669"/>
    <property type="project" value="UniProtKB-KW"/>
</dbReference>
<dbReference type="GO" id="GO:0043093">
    <property type="term" value="P:FtsZ-dependent cytokinesis"/>
    <property type="evidence" value="ECO:0007669"/>
    <property type="project" value="TreeGrafter"/>
</dbReference>
<dbReference type="GO" id="GO:0000921">
    <property type="term" value="P:septin ring assembly"/>
    <property type="evidence" value="ECO:0007669"/>
    <property type="project" value="TreeGrafter"/>
</dbReference>
<dbReference type="FunFam" id="1.20.5.50:FF:000001">
    <property type="entry name" value="Cell division protein ZapA"/>
    <property type="match status" value="1"/>
</dbReference>
<dbReference type="FunFam" id="3.30.160.880:FF:000001">
    <property type="entry name" value="Cell division protein ZapA"/>
    <property type="match status" value="1"/>
</dbReference>
<dbReference type="Gene3D" id="1.20.5.50">
    <property type="match status" value="1"/>
</dbReference>
<dbReference type="Gene3D" id="3.30.160.880">
    <property type="entry name" value="Cell division protein ZapA protomer, N-terminal domain"/>
    <property type="match status" value="1"/>
</dbReference>
<dbReference type="HAMAP" id="MF_02012">
    <property type="entry name" value="ZapA_type1"/>
    <property type="match status" value="1"/>
</dbReference>
<dbReference type="InterPro" id="IPR007838">
    <property type="entry name" value="Cell_div_ZapA-like"/>
</dbReference>
<dbReference type="InterPro" id="IPR036192">
    <property type="entry name" value="Cell_div_ZapA-like_sf"/>
</dbReference>
<dbReference type="InterPro" id="IPR023771">
    <property type="entry name" value="Cell_div_ZapA_eubact"/>
</dbReference>
<dbReference type="InterPro" id="IPR042233">
    <property type="entry name" value="Cell_div_ZapA_N"/>
</dbReference>
<dbReference type="NCBIfam" id="NF008209">
    <property type="entry name" value="PRK10972.1"/>
    <property type="match status" value="1"/>
</dbReference>
<dbReference type="PANTHER" id="PTHR34981">
    <property type="entry name" value="CELL DIVISION PROTEIN ZAPA"/>
    <property type="match status" value="1"/>
</dbReference>
<dbReference type="PANTHER" id="PTHR34981:SF1">
    <property type="entry name" value="CELL DIVISION PROTEIN ZAPA"/>
    <property type="match status" value="1"/>
</dbReference>
<dbReference type="Pfam" id="PF05164">
    <property type="entry name" value="ZapA"/>
    <property type="match status" value="1"/>
</dbReference>
<dbReference type="SUPFAM" id="SSF102829">
    <property type="entry name" value="Cell division protein ZapA-like"/>
    <property type="match status" value="1"/>
</dbReference>
<organism>
    <name type="scientific">Yersinia pseudotuberculosis serotype O:3 (strain YPIII)</name>
    <dbReference type="NCBI Taxonomy" id="502800"/>
    <lineage>
        <taxon>Bacteria</taxon>
        <taxon>Pseudomonadati</taxon>
        <taxon>Pseudomonadota</taxon>
        <taxon>Gammaproteobacteria</taxon>
        <taxon>Enterobacterales</taxon>
        <taxon>Yersiniaceae</taxon>
        <taxon>Yersinia</taxon>
    </lineage>
</organism>
<accession>B1JNS0</accession>
<proteinExistence type="inferred from homology"/>
<reference key="1">
    <citation type="submission" date="2008-02" db="EMBL/GenBank/DDBJ databases">
        <title>Complete sequence of Yersinia pseudotuberculosis YPIII.</title>
        <authorList>
            <consortium name="US DOE Joint Genome Institute"/>
            <person name="Copeland A."/>
            <person name="Lucas S."/>
            <person name="Lapidus A."/>
            <person name="Glavina del Rio T."/>
            <person name="Dalin E."/>
            <person name="Tice H."/>
            <person name="Bruce D."/>
            <person name="Goodwin L."/>
            <person name="Pitluck S."/>
            <person name="Munk A.C."/>
            <person name="Brettin T."/>
            <person name="Detter J.C."/>
            <person name="Han C."/>
            <person name="Tapia R."/>
            <person name="Schmutz J."/>
            <person name="Larimer F."/>
            <person name="Land M."/>
            <person name="Hauser L."/>
            <person name="Challacombe J.F."/>
            <person name="Green L."/>
            <person name="Lindler L.E."/>
            <person name="Nikolich M.P."/>
            <person name="Richardson P."/>
        </authorList>
    </citation>
    <scope>NUCLEOTIDE SEQUENCE [LARGE SCALE GENOMIC DNA]</scope>
    <source>
        <strain>YPIII</strain>
    </source>
</reference>
<gene>
    <name evidence="1" type="primary">zapA</name>
    <name type="ordered locus">YPK_0861</name>
</gene>
<comment type="function">
    <text evidence="1">Activator of cell division through the inhibition of FtsZ GTPase activity, therefore promoting FtsZ assembly into bundles of protofilaments necessary for the formation of the division Z ring. It is recruited early at mid-cell but it is not essential for cell division.</text>
</comment>
<comment type="subunit">
    <text evidence="1">Homodimer. Interacts with FtsZ.</text>
</comment>
<comment type="subcellular location">
    <subcellularLocation>
        <location evidence="1">Cytoplasm</location>
    </subcellularLocation>
    <text evidence="1">Localizes at mid-cell.</text>
</comment>
<comment type="similarity">
    <text evidence="1">Belongs to the ZapA family. Type 1 subfamily.</text>
</comment>